<proteinExistence type="inferred from homology"/>
<keyword id="KW-0175">Coiled coil</keyword>
<keyword id="KW-0963">Cytoplasm</keyword>
<keyword id="KW-0539">Nucleus</keyword>
<keyword id="KW-1185">Reference proteome</keyword>
<evidence type="ECO:0000250" key="1">
    <source>
        <dbReference type="UniProtKB" id="Q3E772"/>
    </source>
</evidence>
<evidence type="ECO:0000255" key="2"/>
<evidence type="ECO:0000256" key="3">
    <source>
        <dbReference type="SAM" id="MobiDB-lite"/>
    </source>
</evidence>
<evidence type="ECO:0000269" key="4">
    <source>
    </source>
</evidence>
<evidence type="ECO:0000305" key="5"/>
<name>CC124_SCHPO</name>
<comment type="function">
    <text evidence="1">Ribosome-binding protein involved in ribosome hibernation by associating with translationally inactive ribosomes. Required for translational recovery after starvation from stationary phase. May facilitate rapid translation reactivation by stabilizing the recycling-competent state of inactive ribosomes.</text>
</comment>
<comment type="subunit">
    <text evidence="1">Associates with translationally inactive ribosomes in the nonrotated state.</text>
</comment>
<comment type="subcellular location">
    <subcellularLocation>
        <location evidence="4">Cytoplasm</location>
    </subcellularLocation>
    <subcellularLocation>
        <location evidence="4">Nucleus</location>
    </subcellularLocation>
</comment>
<comment type="similarity">
    <text evidence="5">Belongs to the CCDC124 family.</text>
</comment>
<gene>
    <name type="ORF">SPBC29A10.12</name>
</gene>
<feature type="chain" id="PRO_0000339130" description="Coiled-coil domain-containing protein 124 homolog">
    <location>
        <begin position="1"/>
        <end position="207"/>
    </location>
</feature>
<feature type="region of interest" description="Disordered" evidence="3">
    <location>
        <begin position="1"/>
        <end position="90"/>
    </location>
</feature>
<feature type="coiled-coil region" evidence="2">
    <location>
        <begin position="5"/>
        <end position="71"/>
    </location>
</feature>
<feature type="compositionally biased region" description="Basic and acidic residues" evidence="3">
    <location>
        <begin position="9"/>
        <end position="28"/>
    </location>
</feature>
<feature type="compositionally biased region" description="Basic and acidic residues" evidence="3">
    <location>
        <begin position="41"/>
        <end position="65"/>
    </location>
</feature>
<organism>
    <name type="scientific">Schizosaccharomyces pombe (strain 972 / ATCC 24843)</name>
    <name type="common">Fission yeast</name>
    <dbReference type="NCBI Taxonomy" id="284812"/>
    <lineage>
        <taxon>Eukaryota</taxon>
        <taxon>Fungi</taxon>
        <taxon>Dikarya</taxon>
        <taxon>Ascomycota</taxon>
        <taxon>Taphrinomycotina</taxon>
        <taxon>Schizosaccharomycetes</taxon>
        <taxon>Schizosaccharomycetales</taxon>
        <taxon>Schizosaccharomycetaceae</taxon>
        <taxon>Schizosaccharomyces</taxon>
    </lineage>
</organism>
<reference key="1">
    <citation type="journal article" date="2002" name="Nature">
        <title>The genome sequence of Schizosaccharomyces pombe.</title>
        <authorList>
            <person name="Wood V."/>
            <person name="Gwilliam R."/>
            <person name="Rajandream M.A."/>
            <person name="Lyne M.H."/>
            <person name="Lyne R."/>
            <person name="Stewart A."/>
            <person name="Sgouros J.G."/>
            <person name="Peat N."/>
            <person name="Hayles J."/>
            <person name="Baker S.G."/>
            <person name="Basham D."/>
            <person name="Bowman S."/>
            <person name="Brooks K."/>
            <person name="Brown D."/>
            <person name="Brown S."/>
            <person name="Chillingworth T."/>
            <person name="Churcher C.M."/>
            <person name="Collins M."/>
            <person name="Connor R."/>
            <person name="Cronin A."/>
            <person name="Davis P."/>
            <person name="Feltwell T."/>
            <person name="Fraser A."/>
            <person name="Gentles S."/>
            <person name="Goble A."/>
            <person name="Hamlin N."/>
            <person name="Harris D.E."/>
            <person name="Hidalgo J."/>
            <person name="Hodgson G."/>
            <person name="Holroyd S."/>
            <person name="Hornsby T."/>
            <person name="Howarth S."/>
            <person name="Huckle E.J."/>
            <person name="Hunt S."/>
            <person name="Jagels K."/>
            <person name="James K.D."/>
            <person name="Jones L."/>
            <person name="Jones M."/>
            <person name="Leather S."/>
            <person name="McDonald S."/>
            <person name="McLean J."/>
            <person name="Mooney P."/>
            <person name="Moule S."/>
            <person name="Mungall K.L."/>
            <person name="Murphy L.D."/>
            <person name="Niblett D."/>
            <person name="Odell C."/>
            <person name="Oliver K."/>
            <person name="O'Neil S."/>
            <person name="Pearson D."/>
            <person name="Quail M.A."/>
            <person name="Rabbinowitsch E."/>
            <person name="Rutherford K.M."/>
            <person name="Rutter S."/>
            <person name="Saunders D."/>
            <person name="Seeger K."/>
            <person name="Sharp S."/>
            <person name="Skelton J."/>
            <person name="Simmonds M.N."/>
            <person name="Squares R."/>
            <person name="Squares S."/>
            <person name="Stevens K."/>
            <person name="Taylor K."/>
            <person name="Taylor R.G."/>
            <person name="Tivey A."/>
            <person name="Walsh S.V."/>
            <person name="Warren T."/>
            <person name="Whitehead S."/>
            <person name="Woodward J.R."/>
            <person name="Volckaert G."/>
            <person name="Aert R."/>
            <person name="Robben J."/>
            <person name="Grymonprez B."/>
            <person name="Weltjens I."/>
            <person name="Vanstreels E."/>
            <person name="Rieger M."/>
            <person name="Schaefer M."/>
            <person name="Mueller-Auer S."/>
            <person name="Gabel C."/>
            <person name="Fuchs M."/>
            <person name="Duesterhoeft A."/>
            <person name="Fritzc C."/>
            <person name="Holzer E."/>
            <person name="Moestl D."/>
            <person name="Hilbert H."/>
            <person name="Borzym K."/>
            <person name="Langer I."/>
            <person name="Beck A."/>
            <person name="Lehrach H."/>
            <person name="Reinhardt R."/>
            <person name="Pohl T.M."/>
            <person name="Eger P."/>
            <person name="Zimmermann W."/>
            <person name="Wedler H."/>
            <person name="Wambutt R."/>
            <person name="Purnelle B."/>
            <person name="Goffeau A."/>
            <person name="Cadieu E."/>
            <person name="Dreano S."/>
            <person name="Gloux S."/>
            <person name="Lelaure V."/>
            <person name="Mottier S."/>
            <person name="Galibert F."/>
            <person name="Aves S.J."/>
            <person name="Xiang Z."/>
            <person name="Hunt C."/>
            <person name="Moore K."/>
            <person name="Hurst S.M."/>
            <person name="Lucas M."/>
            <person name="Rochet M."/>
            <person name="Gaillardin C."/>
            <person name="Tallada V.A."/>
            <person name="Garzon A."/>
            <person name="Thode G."/>
            <person name="Daga R.R."/>
            <person name="Cruzado L."/>
            <person name="Jimenez J."/>
            <person name="Sanchez M."/>
            <person name="del Rey F."/>
            <person name="Benito J."/>
            <person name="Dominguez A."/>
            <person name="Revuelta J.L."/>
            <person name="Moreno S."/>
            <person name="Armstrong J."/>
            <person name="Forsburg S.L."/>
            <person name="Cerutti L."/>
            <person name="Lowe T."/>
            <person name="McCombie W.R."/>
            <person name="Paulsen I."/>
            <person name="Potashkin J."/>
            <person name="Shpakovski G.V."/>
            <person name="Ussery D."/>
            <person name="Barrell B.G."/>
            <person name="Nurse P."/>
        </authorList>
    </citation>
    <scope>NUCLEOTIDE SEQUENCE [LARGE SCALE GENOMIC DNA]</scope>
    <source>
        <strain>972 / ATCC 24843</strain>
    </source>
</reference>
<reference key="2">
    <citation type="journal article" date="2006" name="Nat. Biotechnol.">
        <title>ORFeome cloning and global analysis of protein localization in the fission yeast Schizosaccharomyces pombe.</title>
        <authorList>
            <person name="Matsuyama A."/>
            <person name="Arai R."/>
            <person name="Yashiroda Y."/>
            <person name="Shirai A."/>
            <person name="Kamata A."/>
            <person name="Sekido S."/>
            <person name="Kobayashi Y."/>
            <person name="Hashimoto A."/>
            <person name="Hamamoto M."/>
            <person name="Hiraoka Y."/>
            <person name="Horinouchi S."/>
            <person name="Yoshida M."/>
        </authorList>
    </citation>
    <scope>SUBCELLULAR LOCATION [LARGE SCALE ANALYSIS]</scope>
</reference>
<accession>O94389</accession>
<sequence>MGNPKKRAEKAEAAKSRKQDEEKKKKDAEEDEKWSKGVKTNKKEQEAEKRKAALERKAERERLEKEEMESLPSKGGKGSKKAAKKNSSLDAFLNETPQTASYSARNIDDALDLLSLNNSSSKDKIDRHPERRFKAALTEYKQSRLPELRKEQPGLRLNQYEDIMYKEFQKHPDNPFNKMNVSYNTSQDEVEQLRKARKAELEARLRE</sequence>
<protein>
    <recommendedName>
        <fullName>Coiled-coil domain-containing protein 124 homolog</fullName>
    </recommendedName>
</protein>
<dbReference type="EMBL" id="CU329671">
    <property type="protein sequence ID" value="CAA22440.1"/>
    <property type="molecule type" value="Genomic_DNA"/>
</dbReference>
<dbReference type="PIR" id="T40067">
    <property type="entry name" value="T40067"/>
</dbReference>
<dbReference type="SMR" id="O94389"/>
<dbReference type="BioGRID" id="277069">
    <property type="interactions" value="4"/>
</dbReference>
<dbReference type="FunCoup" id="O94389">
    <property type="interactions" value="315"/>
</dbReference>
<dbReference type="STRING" id="284812.O94389"/>
<dbReference type="iPTMnet" id="O94389"/>
<dbReference type="PaxDb" id="4896-SPBC29A10.12.1"/>
<dbReference type="EnsemblFungi" id="SPBC29A10.12.1">
    <property type="protein sequence ID" value="SPBC29A10.12.1:pep"/>
    <property type="gene ID" value="SPBC29A10.12"/>
</dbReference>
<dbReference type="KEGG" id="spo:2540542"/>
<dbReference type="PomBase" id="SPBC29A10.12"/>
<dbReference type="VEuPathDB" id="FungiDB:SPBC29A10.12"/>
<dbReference type="eggNOG" id="KOG3223">
    <property type="taxonomic scope" value="Eukaryota"/>
</dbReference>
<dbReference type="HOGENOM" id="CLU_069723_1_1_1"/>
<dbReference type="InParanoid" id="O94389"/>
<dbReference type="OMA" id="FEERMMP"/>
<dbReference type="PRO" id="PR:O94389"/>
<dbReference type="Proteomes" id="UP000002485">
    <property type="component" value="Chromosome II"/>
</dbReference>
<dbReference type="GO" id="GO:0005737">
    <property type="term" value="C:cytoplasm"/>
    <property type="evidence" value="ECO:0000314"/>
    <property type="project" value="PomBase"/>
</dbReference>
<dbReference type="GO" id="GO:0005829">
    <property type="term" value="C:cytosol"/>
    <property type="evidence" value="ECO:0007005"/>
    <property type="project" value="PomBase"/>
</dbReference>
<dbReference type="GO" id="GO:0005634">
    <property type="term" value="C:nucleus"/>
    <property type="evidence" value="ECO:0000314"/>
    <property type="project" value="PomBase"/>
</dbReference>
<dbReference type="GO" id="GO:0003713">
    <property type="term" value="F:transcription coactivator activity"/>
    <property type="evidence" value="ECO:0000314"/>
    <property type="project" value="PomBase"/>
</dbReference>
<dbReference type="GO" id="GO:0034599">
    <property type="term" value="P:cellular response to oxidative stress"/>
    <property type="evidence" value="ECO:0000315"/>
    <property type="project" value="PomBase"/>
</dbReference>
<dbReference type="GO" id="GO:0006351">
    <property type="term" value="P:DNA-templated transcription"/>
    <property type="evidence" value="ECO:0000314"/>
    <property type="project" value="PomBase"/>
</dbReference>
<dbReference type="GO" id="GO:0006366">
    <property type="term" value="P:transcription by RNA polymerase II"/>
    <property type="evidence" value="ECO:0000315"/>
    <property type="project" value="PomBase"/>
</dbReference>
<dbReference type="InterPro" id="IPR010422">
    <property type="entry name" value="Ccdc124/Oxs1"/>
</dbReference>
<dbReference type="InterPro" id="IPR054414">
    <property type="entry name" value="Ccdc124/Oxs1_C"/>
</dbReference>
<dbReference type="InterPro" id="IPR054413">
    <property type="entry name" value="LSO1/2"/>
</dbReference>
<dbReference type="PANTHER" id="PTHR21680">
    <property type="entry name" value="COILED-COIL DOMAIN-CONTAINING PROTEIN 124"/>
    <property type="match status" value="1"/>
</dbReference>
<dbReference type="PANTHER" id="PTHR21680:SF0">
    <property type="entry name" value="COILED-COIL DOMAIN-CONTAINING PROTEIN 124"/>
    <property type="match status" value="1"/>
</dbReference>
<dbReference type="Pfam" id="PF06244">
    <property type="entry name" value="Ccdc124"/>
    <property type="match status" value="1"/>
</dbReference>
<dbReference type="Pfam" id="PF22048">
    <property type="entry name" value="LSO1_2-like"/>
    <property type="match status" value="1"/>
</dbReference>